<gene>
    <name type="ordered locus">Msed_0897</name>
</gene>
<feature type="chain" id="PRO_1000085760" description="UPF0248 protein Msed_0897">
    <location>
        <begin position="1"/>
        <end position="78"/>
    </location>
</feature>
<organism>
    <name type="scientific">Metallosphaera sedula (strain ATCC 51363 / DSM 5348 / JCM 9185 / NBRC 15509 / TH2)</name>
    <dbReference type="NCBI Taxonomy" id="399549"/>
    <lineage>
        <taxon>Archaea</taxon>
        <taxon>Thermoproteota</taxon>
        <taxon>Thermoprotei</taxon>
        <taxon>Sulfolobales</taxon>
        <taxon>Sulfolobaceae</taxon>
        <taxon>Metallosphaera</taxon>
    </lineage>
</organism>
<keyword id="KW-1185">Reference proteome</keyword>
<proteinExistence type="inferred from homology"/>
<sequence length="78" mass="9504">MTIKDELNRILWTRRDLENYSVLIVDRFKGLVEIPFPRIERVDNTYIYLDDDTVIPIHRVMEIRMKGQVIWSRTANRR</sequence>
<comment type="similarity">
    <text evidence="1">Belongs to the UPF0248 family.</text>
</comment>
<name>Y897_METS5</name>
<evidence type="ECO:0000255" key="1">
    <source>
        <dbReference type="HAMAP-Rule" id="MF_01245"/>
    </source>
</evidence>
<protein>
    <recommendedName>
        <fullName evidence="1">UPF0248 protein Msed_0897</fullName>
    </recommendedName>
</protein>
<dbReference type="EMBL" id="CP000682">
    <property type="protein sequence ID" value="ABP95069.1"/>
    <property type="molecule type" value="Genomic_DNA"/>
</dbReference>
<dbReference type="RefSeq" id="WP_012020856.1">
    <property type="nucleotide sequence ID" value="NZ_CP139956.1"/>
</dbReference>
<dbReference type="STRING" id="399549.Msed_0897"/>
<dbReference type="KEGG" id="mse:Msed_0897"/>
<dbReference type="eggNOG" id="arCOG01302">
    <property type="taxonomic scope" value="Archaea"/>
</dbReference>
<dbReference type="HOGENOM" id="CLU_172276_2_0_2"/>
<dbReference type="Proteomes" id="UP000000242">
    <property type="component" value="Chromosome"/>
</dbReference>
<dbReference type="HAMAP" id="MF_01245">
    <property type="entry name" value="UPF0248"/>
    <property type="match status" value="1"/>
</dbReference>
<dbReference type="InterPro" id="IPR040459">
    <property type="entry name" value="MJ1316"/>
</dbReference>
<dbReference type="InterPro" id="IPR007547">
    <property type="entry name" value="UPF0248"/>
</dbReference>
<dbReference type="Pfam" id="PF04457">
    <property type="entry name" value="MJ1316"/>
    <property type="match status" value="1"/>
</dbReference>
<accession>A4YF67</accession>
<reference key="1">
    <citation type="journal article" date="2008" name="Appl. Environ. Microbiol.">
        <title>The genome sequence of the metal-mobilizing, extremely thermoacidophilic archaeon Metallosphaera sedula provides insights into bioleaching-associated metabolism.</title>
        <authorList>
            <person name="Auernik K.S."/>
            <person name="Maezato Y."/>
            <person name="Blum P.H."/>
            <person name="Kelly R.M."/>
        </authorList>
    </citation>
    <scope>NUCLEOTIDE SEQUENCE [LARGE SCALE GENOMIC DNA]</scope>
    <source>
        <strain>ATCC 51363 / DSM 5348 / JCM 9185 / NBRC 15509 / TH2</strain>
    </source>
</reference>